<evidence type="ECO:0000250" key="1"/>
<evidence type="ECO:0000255" key="2">
    <source>
        <dbReference type="PROSITE-ProRule" id="PRU00541"/>
    </source>
</evidence>
<evidence type="ECO:0000255" key="3">
    <source>
        <dbReference type="PROSITE-ProRule" id="PRU00542"/>
    </source>
</evidence>
<evidence type="ECO:0000256" key="4">
    <source>
        <dbReference type="SAM" id="MobiDB-lite"/>
    </source>
</evidence>
<evidence type="ECO:0000305" key="5"/>
<accession>Q4WT99</accession>
<comment type="function">
    <text evidence="1">ATP-dependent RNA helicase involved spliceosome assembly and in nuclear splicing. Catalyzes an ATP-dependent conformational change of U2 snRNP. Bridges U1 and U2 snRNPs and enables stable U2 snRNP association with intron RNA (By similarity).</text>
</comment>
<comment type="catalytic activity">
    <reaction>
        <text>ATP + H2O = ADP + phosphate + H(+)</text>
        <dbReference type="Rhea" id="RHEA:13065"/>
        <dbReference type="ChEBI" id="CHEBI:15377"/>
        <dbReference type="ChEBI" id="CHEBI:15378"/>
        <dbReference type="ChEBI" id="CHEBI:30616"/>
        <dbReference type="ChEBI" id="CHEBI:43474"/>
        <dbReference type="ChEBI" id="CHEBI:456216"/>
        <dbReference type="EC" id="3.6.4.13"/>
    </reaction>
</comment>
<comment type="subcellular location">
    <subcellularLocation>
        <location evidence="1">Nucleus</location>
    </subcellularLocation>
</comment>
<comment type="domain">
    <text>The Q motif is unique to and characteristic of the DEAD box family of RNA helicases and controls ATP binding and hydrolysis.</text>
</comment>
<comment type="similarity">
    <text evidence="5">Belongs to the DEAD box helicase family. DDX46/PRP5 subfamily.</text>
</comment>
<protein>
    <recommendedName>
        <fullName>Pre-mRNA-processing ATP-dependent RNA helicase prp5</fullName>
        <ecNumber>3.6.4.13</ecNumber>
    </recommendedName>
</protein>
<sequence length="1211" mass="133782">MARHGDTRSPSPVGSTYSSSRRSRRDDDRYEKSRRDDLRSYRRSRSPERRYRDRDRDSYRRRDRSVDRRDDHRDEDSYRSSRRDRSRDRRRSRDRGDDRDHRRKSRERDYRSRRDDSRDRARRRTDDSADLKHKSRRDDSRTRNLDSKPREASKPSTPAPTAPTEDEKRAERLAKLEAWKQKQAAERERKQREAAAAGGARSILEEIDRKSGLSPAVGSPQSPATPTTDATPTPYSGKFDPKAIVRNAAPAPSTPAVLGNDVAVPQSAKASASSSSMNNHVQANKHPAANSTTSCKLYIPTIRFLQIANVTCTATSTVKRNVGGFGLGAKQVADAEKSSAVKTLGFGEEESKRKKLERLPTPPLEDAKDDMGAVDAAVEDEDDVDMQDGGTEEENAAAARAAAERREERLQSEALRAQSKEAALQSNGDVEMNDVPHQAESEKMEVDAAEEEVDPLDAFMSELAETAPPKKTTGARFTKAKDQQPEAMFGDEHDVDLTAVGEGDADDFLAIANKAKKKKDIPTVDHEKMEYEPFRKKFYTEPSNLAEMTDEEAASLRLELDGIKVRGVDVPKPVMKWSQCGLGVQTLDVIQKLGYENPTSIQSQAIPAIMSGRDVIGVAKTGSGKTIAFLIPMFRHIRDQRPLENMEGPIGLIMTPTRELATQIHKDCKPFLKALNLRAVCAYGGAPIKDQIAELKRGAEIVVCTPGRMIDLLAANAGRVTNLRRVTYVVLDEADRMFDMGFEPQVMKIMANIRPDRQTVLFSATFPRNMEALARKSLTKPIEIVVGGKSVVAPEITQIVEVRNEDTKFVRLLEILGNLYSDDANEDARALIFVDRQEAADTLLRELMRKGYPCMSIHGGKDQIDRDSTIEDFKAGIFPVLIATSVAARGLDVKQLKLVVNYDAPNHLEDYVHRAGRTGRAGNTGTAVTFLTEEQERYSVDIAKALRQSGQKVPEPVQKMVDSFLEKVKAGKEKASASGFGGKGLERLDQERDAARMRERRTYKTGEEGEDEEDKEDKAEKADERFSKIVSSVQSAAAAATTPLPGVPKGIDLDGKITVHRTEKDPAGASKNPLDKVGSAVADIHARLSRAGVMRSGVPIDNRGPDAGAFHATLEINDFPQKARWAVTNRTNVAKILEATGTSITTKGSFYPAGKEPGPGENPKLYILVEGETELAVTNAMRELMRLLKEGTLAAADSDARAPVGGRYNVV</sequence>
<keyword id="KW-0067">ATP-binding</keyword>
<keyword id="KW-0347">Helicase</keyword>
<keyword id="KW-0378">Hydrolase</keyword>
<keyword id="KW-0507">mRNA processing</keyword>
<keyword id="KW-0508">mRNA splicing</keyword>
<keyword id="KW-0547">Nucleotide-binding</keyword>
<keyword id="KW-0539">Nucleus</keyword>
<keyword id="KW-1185">Reference proteome</keyword>
<feature type="chain" id="PRO_0000232357" description="Pre-mRNA-processing ATP-dependent RNA helicase prp5">
    <location>
        <begin position="1"/>
        <end position="1211"/>
    </location>
</feature>
<feature type="domain" description="Helicase ATP-binding" evidence="2">
    <location>
        <begin position="606"/>
        <end position="784"/>
    </location>
</feature>
<feature type="domain" description="Helicase C-terminal" evidence="3">
    <location>
        <begin position="811"/>
        <end position="961"/>
    </location>
</feature>
<feature type="region of interest" description="Disordered" evidence="4">
    <location>
        <begin position="1"/>
        <end position="240"/>
    </location>
</feature>
<feature type="region of interest" description="Disordered" evidence="4">
    <location>
        <begin position="344"/>
        <end position="429"/>
    </location>
</feature>
<feature type="region of interest" description="Disordered" evidence="4">
    <location>
        <begin position="975"/>
        <end position="1023"/>
    </location>
</feature>
<feature type="short sequence motif" description="Q motif">
    <location>
        <begin position="575"/>
        <end position="603"/>
    </location>
</feature>
<feature type="short sequence motif" description="DEAD box">
    <location>
        <begin position="732"/>
        <end position="735"/>
    </location>
</feature>
<feature type="compositionally biased region" description="Low complexity" evidence="4">
    <location>
        <begin position="8"/>
        <end position="20"/>
    </location>
</feature>
<feature type="compositionally biased region" description="Basic and acidic residues" evidence="4">
    <location>
        <begin position="24"/>
        <end position="87"/>
    </location>
</feature>
<feature type="compositionally biased region" description="Basic and acidic residues" evidence="4">
    <location>
        <begin position="94"/>
        <end position="153"/>
    </location>
</feature>
<feature type="compositionally biased region" description="Basic and acidic residues" evidence="4">
    <location>
        <begin position="165"/>
        <end position="193"/>
    </location>
</feature>
<feature type="compositionally biased region" description="Low complexity" evidence="4">
    <location>
        <begin position="219"/>
        <end position="234"/>
    </location>
</feature>
<feature type="compositionally biased region" description="Acidic residues" evidence="4">
    <location>
        <begin position="377"/>
        <end position="395"/>
    </location>
</feature>
<feature type="compositionally biased region" description="Basic and acidic residues" evidence="4">
    <location>
        <begin position="402"/>
        <end position="411"/>
    </location>
</feature>
<feature type="compositionally biased region" description="Basic and acidic residues" evidence="4">
    <location>
        <begin position="984"/>
        <end position="1007"/>
    </location>
</feature>
<feature type="binding site" evidence="2">
    <location>
        <begin position="619"/>
        <end position="626"/>
    </location>
    <ligand>
        <name>ATP</name>
        <dbReference type="ChEBI" id="CHEBI:30616"/>
    </ligand>
</feature>
<reference key="1">
    <citation type="journal article" date="2005" name="Nature">
        <title>Genomic sequence of the pathogenic and allergenic filamentous fungus Aspergillus fumigatus.</title>
        <authorList>
            <person name="Nierman W.C."/>
            <person name="Pain A."/>
            <person name="Anderson M.J."/>
            <person name="Wortman J.R."/>
            <person name="Kim H.S."/>
            <person name="Arroyo J."/>
            <person name="Berriman M."/>
            <person name="Abe K."/>
            <person name="Archer D.B."/>
            <person name="Bermejo C."/>
            <person name="Bennett J.W."/>
            <person name="Bowyer P."/>
            <person name="Chen D."/>
            <person name="Collins M."/>
            <person name="Coulsen R."/>
            <person name="Davies R."/>
            <person name="Dyer P.S."/>
            <person name="Farman M.L."/>
            <person name="Fedorova N."/>
            <person name="Fedorova N.D."/>
            <person name="Feldblyum T.V."/>
            <person name="Fischer R."/>
            <person name="Fosker N."/>
            <person name="Fraser A."/>
            <person name="Garcia J.L."/>
            <person name="Garcia M.J."/>
            <person name="Goble A."/>
            <person name="Goldman G.H."/>
            <person name="Gomi K."/>
            <person name="Griffith-Jones S."/>
            <person name="Gwilliam R."/>
            <person name="Haas B.J."/>
            <person name="Haas H."/>
            <person name="Harris D.E."/>
            <person name="Horiuchi H."/>
            <person name="Huang J."/>
            <person name="Humphray S."/>
            <person name="Jimenez J."/>
            <person name="Keller N."/>
            <person name="Khouri H."/>
            <person name="Kitamoto K."/>
            <person name="Kobayashi T."/>
            <person name="Konzack S."/>
            <person name="Kulkarni R."/>
            <person name="Kumagai T."/>
            <person name="Lafton A."/>
            <person name="Latge J.-P."/>
            <person name="Li W."/>
            <person name="Lord A."/>
            <person name="Lu C."/>
            <person name="Majoros W.H."/>
            <person name="May G.S."/>
            <person name="Miller B.L."/>
            <person name="Mohamoud Y."/>
            <person name="Molina M."/>
            <person name="Monod M."/>
            <person name="Mouyna I."/>
            <person name="Mulligan S."/>
            <person name="Murphy L.D."/>
            <person name="O'Neil S."/>
            <person name="Paulsen I."/>
            <person name="Penalva M.A."/>
            <person name="Pertea M."/>
            <person name="Price C."/>
            <person name="Pritchard B.L."/>
            <person name="Quail M.A."/>
            <person name="Rabbinowitsch E."/>
            <person name="Rawlins N."/>
            <person name="Rajandream M.A."/>
            <person name="Reichard U."/>
            <person name="Renauld H."/>
            <person name="Robson G.D."/>
            <person name="Rodriguez de Cordoba S."/>
            <person name="Rodriguez-Pena J.M."/>
            <person name="Ronning C.M."/>
            <person name="Rutter S."/>
            <person name="Salzberg S.L."/>
            <person name="Sanchez M."/>
            <person name="Sanchez-Ferrero J.C."/>
            <person name="Saunders D."/>
            <person name="Seeger K."/>
            <person name="Squares R."/>
            <person name="Squares S."/>
            <person name="Takeuchi M."/>
            <person name="Tekaia F."/>
            <person name="Turner G."/>
            <person name="Vazquez de Aldana C.R."/>
            <person name="Weidman J."/>
            <person name="White O."/>
            <person name="Woodward J.R."/>
            <person name="Yu J.-H."/>
            <person name="Fraser C.M."/>
            <person name="Galagan J.E."/>
            <person name="Asai K."/>
            <person name="Machida M."/>
            <person name="Hall N."/>
            <person name="Barrell B.G."/>
            <person name="Denning D.W."/>
        </authorList>
    </citation>
    <scope>NUCLEOTIDE SEQUENCE [LARGE SCALE GENOMIC DNA]</scope>
    <source>
        <strain>ATCC MYA-4609 / CBS 101355 / FGSC A1100 / Af293</strain>
    </source>
</reference>
<name>PRP5_ASPFU</name>
<gene>
    <name type="primary">prp5</name>
    <name type="ORF">AFUA_1G10050</name>
</gene>
<proteinExistence type="inferred from homology"/>
<dbReference type="EC" id="3.6.4.13"/>
<dbReference type="EMBL" id="AAHF01000004">
    <property type="protein sequence ID" value="EAL90333.1"/>
    <property type="molecule type" value="Genomic_DNA"/>
</dbReference>
<dbReference type="RefSeq" id="XP_752371.1">
    <property type="nucleotide sequence ID" value="XM_747278.1"/>
</dbReference>
<dbReference type="SMR" id="Q4WT99"/>
<dbReference type="FunCoup" id="Q4WT99">
    <property type="interactions" value="1039"/>
</dbReference>
<dbReference type="STRING" id="330879.Q4WT99"/>
<dbReference type="EnsemblFungi" id="EAL90333">
    <property type="protein sequence ID" value="EAL90333"/>
    <property type="gene ID" value="AFUA_1G10050"/>
</dbReference>
<dbReference type="GeneID" id="3510546"/>
<dbReference type="KEGG" id="afm:AFUA_1G10050"/>
<dbReference type="eggNOG" id="KOG0334">
    <property type="taxonomic scope" value="Eukaryota"/>
</dbReference>
<dbReference type="HOGENOM" id="CLU_003041_0_3_1"/>
<dbReference type="InParanoid" id="Q4WT99"/>
<dbReference type="OMA" id="QLPMKKW"/>
<dbReference type="OrthoDB" id="196131at2759"/>
<dbReference type="Proteomes" id="UP000002530">
    <property type="component" value="Chromosome 1"/>
</dbReference>
<dbReference type="GO" id="GO:0005634">
    <property type="term" value="C:nucleus"/>
    <property type="evidence" value="ECO:0000318"/>
    <property type="project" value="GO_Central"/>
</dbReference>
<dbReference type="GO" id="GO:0005524">
    <property type="term" value="F:ATP binding"/>
    <property type="evidence" value="ECO:0007669"/>
    <property type="project" value="UniProtKB-KW"/>
</dbReference>
<dbReference type="GO" id="GO:0016887">
    <property type="term" value="F:ATP hydrolysis activity"/>
    <property type="evidence" value="ECO:0007669"/>
    <property type="project" value="RHEA"/>
</dbReference>
<dbReference type="GO" id="GO:0003676">
    <property type="term" value="F:nucleic acid binding"/>
    <property type="evidence" value="ECO:0007669"/>
    <property type="project" value="InterPro"/>
</dbReference>
<dbReference type="GO" id="GO:0003724">
    <property type="term" value="F:RNA helicase activity"/>
    <property type="evidence" value="ECO:0007669"/>
    <property type="project" value="UniProtKB-EC"/>
</dbReference>
<dbReference type="GO" id="GO:0000398">
    <property type="term" value="P:mRNA splicing, via spliceosome"/>
    <property type="evidence" value="ECO:0000318"/>
    <property type="project" value="GO_Central"/>
</dbReference>
<dbReference type="CDD" id="cd17953">
    <property type="entry name" value="DEADc_DDX46"/>
    <property type="match status" value="1"/>
</dbReference>
<dbReference type="CDD" id="cd22474">
    <property type="entry name" value="KH-I_PRP5_like"/>
    <property type="match status" value="1"/>
</dbReference>
<dbReference type="CDD" id="cd18787">
    <property type="entry name" value="SF2_C_DEAD"/>
    <property type="match status" value="1"/>
</dbReference>
<dbReference type="FunFam" id="3.40.50.300:FF:000079">
    <property type="entry name" value="probable ATP-dependent RNA helicase DDX17"/>
    <property type="match status" value="1"/>
</dbReference>
<dbReference type="Gene3D" id="3.40.50.300">
    <property type="entry name" value="P-loop containing nucleotide triphosphate hydrolases"/>
    <property type="match status" value="2"/>
</dbReference>
<dbReference type="InterPro" id="IPR011545">
    <property type="entry name" value="DEAD/DEAH_box_helicase_dom"/>
</dbReference>
<dbReference type="InterPro" id="IPR014001">
    <property type="entry name" value="Helicase_ATP-bd"/>
</dbReference>
<dbReference type="InterPro" id="IPR001650">
    <property type="entry name" value="Helicase_C-like"/>
</dbReference>
<dbReference type="InterPro" id="IPR027417">
    <property type="entry name" value="P-loop_NTPase"/>
</dbReference>
<dbReference type="InterPro" id="IPR056149">
    <property type="entry name" value="PRP5/DDX46/KHDC4_KH"/>
</dbReference>
<dbReference type="InterPro" id="IPR000629">
    <property type="entry name" value="RNA-helicase_DEAD-box_CS"/>
</dbReference>
<dbReference type="InterPro" id="IPR014014">
    <property type="entry name" value="RNA_helicase_DEAD_Q_motif"/>
</dbReference>
<dbReference type="PANTHER" id="PTHR47958">
    <property type="entry name" value="ATP-DEPENDENT RNA HELICASE DBP3"/>
    <property type="match status" value="1"/>
</dbReference>
<dbReference type="Pfam" id="PF00270">
    <property type="entry name" value="DEAD"/>
    <property type="match status" value="1"/>
</dbReference>
<dbReference type="Pfam" id="PF00271">
    <property type="entry name" value="Helicase_C"/>
    <property type="match status" value="1"/>
</dbReference>
<dbReference type="Pfam" id="PF23469">
    <property type="entry name" value="KH_12"/>
    <property type="match status" value="1"/>
</dbReference>
<dbReference type="SMART" id="SM00487">
    <property type="entry name" value="DEXDc"/>
    <property type="match status" value="1"/>
</dbReference>
<dbReference type="SMART" id="SM00490">
    <property type="entry name" value="HELICc"/>
    <property type="match status" value="1"/>
</dbReference>
<dbReference type="SUPFAM" id="SSF52540">
    <property type="entry name" value="P-loop containing nucleoside triphosphate hydrolases"/>
    <property type="match status" value="1"/>
</dbReference>
<dbReference type="PROSITE" id="PS00039">
    <property type="entry name" value="DEAD_ATP_HELICASE"/>
    <property type="match status" value="1"/>
</dbReference>
<dbReference type="PROSITE" id="PS51192">
    <property type="entry name" value="HELICASE_ATP_BIND_1"/>
    <property type="match status" value="1"/>
</dbReference>
<dbReference type="PROSITE" id="PS51194">
    <property type="entry name" value="HELICASE_CTER"/>
    <property type="match status" value="1"/>
</dbReference>
<dbReference type="PROSITE" id="PS51195">
    <property type="entry name" value="Q_MOTIF"/>
    <property type="match status" value="1"/>
</dbReference>
<organism>
    <name type="scientific">Aspergillus fumigatus (strain ATCC MYA-4609 / CBS 101355 / FGSC A1100 / Af293)</name>
    <name type="common">Neosartorya fumigata</name>
    <dbReference type="NCBI Taxonomy" id="330879"/>
    <lineage>
        <taxon>Eukaryota</taxon>
        <taxon>Fungi</taxon>
        <taxon>Dikarya</taxon>
        <taxon>Ascomycota</taxon>
        <taxon>Pezizomycotina</taxon>
        <taxon>Eurotiomycetes</taxon>
        <taxon>Eurotiomycetidae</taxon>
        <taxon>Eurotiales</taxon>
        <taxon>Aspergillaceae</taxon>
        <taxon>Aspergillus</taxon>
        <taxon>Aspergillus subgen. Fumigati</taxon>
    </lineage>
</organism>